<sequence length="436" mass="46484">MGQVLPLVTRQGDRIAIVSGLRTPFARQATAFHGIPAVDLGKMVVGELLARSEIPAEVIEQLVFGQVVQMPEAPNIAREIVLGTGMNVHTDAYSVSRACATSFQAVANVAESLMAGTIRAGIAGGADSSSVLPIGVSKKLARVLVDVNKARTMSQRLKLFSRLRLRDLMPVPPAVAEYSTGLRMGDTAEQMAKTYGITREQQDALAHRSHQRAAQAWSDGKLKEEVMTAFIPPYKQPLAEDNNIRGNSSLADYAKLRPAFDRKHGTVTAANSTPLTDGAAAVILMTESRAKELGLVPLGYLRSYAFTAIDVWQDMLLGPAWSTPLALERAGLTMSDLTLIDMHEAFAAQTLANIQLLGSERFARDVLGRAHATGEVDDSKFNVLGGSIAYGHPFAATGARMITQTLHELRRRGGGFGLVTACAAGGLGAAIVVEAE</sequence>
<gene>
    <name evidence="1" type="primary">fadI</name>
    <name type="ordered locus">c2887</name>
</gene>
<feature type="chain" id="PRO_0000206439" description="3-ketoacyl-CoA thiolase">
    <location>
        <begin position="1"/>
        <end position="436"/>
    </location>
</feature>
<feature type="active site" description="Acyl-thioester intermediate" evidence="1">
    <location>
        <position position="99"/>
    </location>
</feature>
<feature type="active site" description="Proton acceptor" evidence="1">
    <location>
        <position position="392"/>
    </location>
</feature>
<feature type="active site" description="Proton acceptor" evidence="1">
    <location>
        <position position="422"/>
    </location>
</feature>
<dbReference type="EC" id="2.3.1.16" evidence="1"/>
<dbReference type="EMBL" id="AJ586889">
    <property type="protein sequence ID" value="CAE55847.1"/>
    <property type="molecule type" value="Genomic_DNA"/>
</dbReference>
<dbReference type="EMBL" id="AE014075">
    <property type="protein sequence ID" value="AAN81337.1"/>
    <property type="molecule type" value="Genomic_DNA"/>
</dbReference>
<dbReference type="RefSeq" id="WP_000531944.1">
    <property type="nucleotide sequence ID" value="NZ_CP051263.1"/>
</dbReference>
<dbReference type="SMR" id="Q8FFG3"/>
<dbReference type="STRING" id="199310.c2887"/>
<dbReference type="KEGG" id="ecc:c2887"/>
<dbReference type="eggNOG" id="COG0183">
    <property type="taxonomic scope" value="Bacteria"/>
</dbReference>
<dbReference type="HOGENOM" id="CLU_031026_2_0_6"/>
<dbReference type="BioCyc" id="ECOL199310:C2887-MONOMER"/>
<dbReference type="UniPathway" id="UPA00659"/>
<dbReference type="Proteomes" id="UP000001410">
    <property type="component" value="Chromosome"/>
</dbReference>
<dbReference type="GO" id="GO:0005829">
    <property type="term" value="C:cytosol"/>
    <property type="evidence" value="ECO:0007669"/>
    <property type="project" value="TreeGrafter"/>
</dbReference>
<dbReference type="GO" id="GO:0003988">
    <property type="term" value="F:acetyl-CoA C-acyltransferase activity"/>
    <property type="evidence" value="ECO:0007669"/>
    <property type="project" value="UniProtKB-UniRule"/>
</dbReference>
<dbReference type="GO" id="GO:0006635">
    <property type="term" value="P:fatty acid beta-oxidation"/>
    <property type="evidence" value="ECO:0007669"/>
    <property type="project" value="UniProtKB-UniRule"/>
</dbReference>
<dbReference type="CDD" id="cd00751">
    <property type="entry name" value="thiolase"/>
    <property type="match status" value="1"/>
</dbReference>
<dbReference type="FunFam" id="3.40.47.10:FF:000011">
    <property type="entry name" value="3-ketoacyl-CoA thiolase"/>
    <property type="match status" value="1"/>
</dbReference>
<dbReference type="Gene3D" id="3.40.47.10">
    <property type="match status" value="1"/>
</dbReference>
<dbReference type="HAMAP" id="MF_01618">
    <property type="entry name" value="FadI"/>
    <property type="match status" value="1"/>
</dbReference>
<dbReference type="InterPro" id="IPR012806">
    <property type="entry name" value="Ac-CoA_C-AcTrfase_FadI"/>
</dbReference>
<dbReference type="InterPro" id="IPR002155">
    <property type="entry name" value="Thiolase"/>
</dbReference>
<dbReference type="InterPro" id="IPR016039">
    <property type="entry name" value="Thiolase-like"/>
</dbReference>
<dbReference type="InterPro" id="IPR020615">
    <property type="entry name" value="Thiolase_acyl_enz_int_AS"/>
</dbReference>
<dbReference type="InterPro" id="IPR020610">
    <property type="entry name" value="Thiolase_AS"/>
</dbReference>
<dbReference type="InterPro" id="IPR020617">
    <property type="entry name" value="Thiolase_C"/>
</dbReference>
<dbReference type="InterPro" id="IPR020613">
    <property type="entry name" value="Thiolase_CS"/>
</dbReference>
<dbReference type="InterPro" id="IPR020616">
    <property type="entry name" value="Thiolase_N"/>
</dbReference>
<dbReference type="NCBIfam" id="TIGR01930">
    <property type="entry name" value="AcCoA-C-Actrans"/>
    <property type="match status" value="1"/>
</dbReference>
<dbReference type="NCBIfam" id="TIGR02446">
    <property type="entry name" value="FadI"/>
    <property type="match status" value="1"/>
</dbReference>
<dbReference type="NCBIfam" id="NF006516">
    <property type="entry name" value="PRK08963.1"/>
    <property type="match status" value="1"/>
</dbReference>
<dbReference type="PANTHER" id="PTHR18919:SF107">
    <property type="entry name" value="ACETYL-COA ACETYLTRANSFERASE, CYTOSOLIC"/>
    <property type="match status" value="1"/>
</dbReference>
<dbReference type="PANTHER" id="PTHR18919">
    <property type="entry name" value="ACETYL-COA C-ACYLTRANSFERASE"/>
    <property type="match status" value="1"/>
</dbReference>
<dbReference type="Pfam" id="PF02803">
    <property type="entry name" value="Thiolase_C"/>
    <property type="match status" value="1"/>
</dbReference>
<dbReference type="Pfam" id="PF00108">
    <property type="entry name" value="Thiolase_N"/>
    <property type="match status" value="1"/>
</dbReference>
<dbReference type="PIRSF" id="PIRSF000429">
    <property type="entry name" value="Ac-CoA_Ac_transf"/>
    <property type="match status" value="1"/>
</dbReference>
<dbReference type="SUPFAM" id="SSF53901">
    <property type="entry name" value="Thiolase-like"/>
    <property type="match status" value="2"/>
</dbReference>
<dbReference type="PROSITE" id="PS00098">
    <property type="entry name" value="THIOLASE_1"/>
    <property type="match status" value="1"/>
</dbReference>
<dbReference type="PROSITE" id="PS00737">
    <property type="entry name" value="THIOLASE_2"/>
    <property type="match status" value="1"/>
</dbReference>
<dbReference type="PROSITE" id="PS00099">
    <property type="entry name" value="THIOLASE_3"/>
    <property type="match status" value="1"/>
</dbReference>
<reference key="1">
    <citation type="journal article" date="2004" name="J. Bacteriol.">
        <title>Analysis of the genome structure of the nonpathogenic probiotic Escherichia coli strain Nissle 1917.</title>
        <authorList>
            <person name="Grozdanov L."/>
            <person name="Raasch C."/>
            <person name="Schulze J."/>
            <person name="Sonnenborn U."/>
            <person name="Gottschalk G."/>
            <person name="Hacker J."/>
            <person name="Dobrindt U."/>
        </authorList>
    </citation>
    <scope>NUCLEOTIDE SEQUENCE [GENOMIC DNA]</scope>
    <source>
        <strain>O6:K5:H1 / Nissle 1917</strain>
    </source>
</reference>
<reference key="2">
    <citation type="journal article" date="2002" name="Proc. Natl. Acad. Sci. U.S.A.">
        <title>Extensive mosaic structure revealed by the complete genome sequence of uropathogenic Escherichia coli.</title>
        <authorList>
            <person name="Welch R.A."/>
            <person name="Burland V."/>
            <person name="Plunkett G. III"/>
            <person name="Redford P."/>
            <person name="Roesch P."/>
            <person name="Rasko D."/>
            <person name="Buckles E.L."/>
            <person name="Liou S.-R."/>
            <person name="Boutin A."/>
            <person name="Hackett J."/>
            <person name="Stroud D."/>
            <person name="Mayhew G.F."/>
            <person name="Rose D.J."/>
            <person name="Zhou S."/>
            <person name="Schwartz D.C."/>
            <person name="Perna N.T."/>
            <person name="Mobley H.L.T."/>
            <person name="Donnenberg M.S."/>
            <person name="Blattner F.R."/>
        </authorList>
    </citation>
    <scope>NUCLEOTIDE SEQUENCE [LARGE SCALE GENOMIC DNA]</scope>
    <source>
        <strain>CFT073 / ATCC 700928 / UPEC</strain>
    </source>
</reference>
<evidence type="ECO:0000255" key="1">
    <source>
        <dbReference type="HAMAP-Rule" id="MF_01618"/>
    </source>
</evidence>
<organism>
    <name type="scientific">Escherichia coli O6:H1 (strain CFT073 / ATCC 700928 / UPEC)</name>
    <dbReference type="NCBI Taxonomy" id="199310"/>
    <lineage>
        <taxon>Bacteria</taxon>
        <taxon>Pseudomonadati</taxon>
        <taxon>Pseudomonadota</taxon>
        <taxon>Gammaproteobacteria</taxon>
        <taxon>Enterobacterales</taxon>
        <taxon>Enterobacteriaceae</taxon>
        <taxon>Escherichia</taxon>
    </lineage>
</organism>
<name>FADI_ECOL6</name>
<protein>
    <recommendedName>
        <fullName evidence="1">3-ketoacyl-CoA thiolase</fullName>
        <ecNumber evidence="1">2.3.1.16</ecNumber>
    </recommendedName>
    <alternativeName>
        <fullName evidence="1">ACSs</fullName>
    </alternativeName>
    <alternativeName>
        <fullName evidence="1">Acetyl-CoA acyltransferase</fullName>
    </alternativeName>
    <alternativeName>
        <fullName evidence="1">Acyl-CoA ligase</fullName>
    </alternativeName>
    <alternativeName>
        <fullName evidence="1">Beta-ketothiolase</fullName>
    </alternativeName>
    <alternativeName>
        <fullName evidence="1">Fatty acid oxidation complex subunit beta</fullName>
    </alternativeName>
</protein>
<proteinExistence type="inferred from homology"/>
<accession>Q8FFG3</accession>
<keyword id="KW-0012">Acyltransferase</keyword>
<keyword id="KW-0963">Cytoplasm</keyword>
<keyword id="KW-0276">Fatty acid metabolism</keyword>
<keyword id="KW-0442">Lipid degradation</keyword>
<keyword id="KW-0443">Lipid metabolism</keyword>
<keyword id="KW-1185">Reference proteome</keyword>
<keyword id="KW-0808">Transferase</keyword>
<comment type="function">
    <text evidence="1">Catalyzes the final step of fatty acid oxidation in which acetyl-CoA is released and the CoA ester of a fatty acid two carbons shorter is formed.</text>
</comment>
<comment type="catalytic activity">
    <reaction evidence="1">
        <text>an acyl-CoA + acetyl-CoA = a 3-oxoacyl-CoA + CoA</text>
        <dbReference type="Rhea" id="RHEA:21564"/>
        <dbReference type="ChEBI" id="CHEBI:57287"/>
        <dbReference type="ChEBI" id="CHEBI:57288"/>
        <dbReference type="ChEBI" id="CHEBI:58342"/>
        <dbReference type="ChEBI" id="CHEBI:90726"/>
        <dbReference type="EC" id="2.3.1.16"/>
    </reaction>
</comment>
<comment type="pathway">
    <text evidence="1">Lipid metabolism; fatty acid beta-oxidation.</text>
</comment>
<comment type="subunit">
    <text evidence="1">Heterotetramer of two alpha chains (FadJ) and two beta chains (FadI).</text>
</comment>
<comment type="subcellular location">
    <subcellularLocation>
        <location evidence="1">Cytoplasm</location>
    </subcellularLocation>
</comment>
<comment type="similarity">
    <text evidence="1">Belongs to the thiolase-like superfamily. Thiolase family.</text>
</comment>